<organism>
    <name type="scientific">Bradyrhizobium diazoefficiens (strain JCM 10833 / BCRC 13528 / IAM 13628 / NBRC 14792 / USDA 110)</name>
    <dbReference type="NCBI Taxonomy" id="224911"/>
    <lineage>
        <taxon>Bacteria</taxon>
        <taxon>Pseudomonadati</taxon>
        <taxon>Pseudomonadota</taxon>
        <taxon>Alphaproteobacteria</taxon>
        <taxon>Hyphomicrobiales</taxon>
        <taxon>Nitrobacteraceae</taxon>
        <taxon>Bradyrhizobium</taxon>
    </lineage>
</organism>
<comment type="function">
    <text evidence="2">Catalyzes hydrolytic cleavage of carbon-halogen bonds in halogenated aliphatic compounds, leading to the formation of the corresponding primary alcohols, halide ions and protons.</text>
</comment>
<comment type="catalytic activity">
    <reaction evidence="2">
        <text>1-haloalkane + H2O = a halide anion + a primary alcohol + H(+)</text>
        <dbReference type="Rhea" id="RHEA:19081"/>
        <dbReference type="ChEBI" id="CHEBI:15377"/>
        <dbReference type="ChEBI" id="CHEBI:15378"/>
        <dbReference type="ChEBI" id="CHEBI:15734"/>
        <dbReference type="ChEBI" id="CHEBI:16042"/>
        <dbReference type="ChEBI" id="CHEBI:18060"/>
        <dbReference type="EC" id="3.8.1.5"/>
    </reaction>
</comment>
<comment type="subunit">
    <text evidence="2">Monomer.</text>
</comment>
<comment type="interaction">
    <interactant intactId="EBI-6967845">
        <id>P59337</id>
    </interactant>
    <interactant intactId="EBI-6967845">
        <id>P59337</id>
        <label>dhaA</label>
    </interactant>
    <organismsDiffer>false</organismsDiffer>
    <experiments>2</experiments>
</comment>
<comment type="similarity">
    <text evidence="2">Belongs to the haloalkane dehalogenase family. Type 2 subfamily.</text>
</comment>
<reference key="1">
    <citation type="journal article" date="2002" name="DNA Res.">
        <title>Complete genomic sequence of nitrogen-fixing symbiotic bacterium Bradyrhizobium japonicum USDA110.</title>
        <authorList>
            <person name="Kaneko T."/>
            <person name="Nakamura Y."/>
            <person name="Sato S."/>
            <person name="Minamisawa K."/>
            <person name="Uchiumi T."/>
            <person name="Sasamoto S."/>
            <person name="Watanabe A."/>
            <person name="Idesawa K."/>
            <person name="Iriguchi M."/>
            <person name="Kawashima K."/>
            <person name="Kohara M."/>
            <person name="Matsumoto M."/>
            <person name="Shimpo S."/>
            <person name="Tsuruoka H."/>
            <person name="Wada T."/>
            <person name="Yamada M."/>
            <person name="Tabata S."/>
        </authorList>
    </citation>
    <scope>NUCLEOTIDE SEQUENCE [LARGE SCALE GENOMIC DNA]</scope>
    <source>
        <strain>JCM 10833 / BCRC 13528 / IAM 13628 / NBRC 14792 / USDA 110</strain>
    </source>
</reference>
<keyword id="KW-0002">3D-structure</keyword>
<keyword id="KW-0378">Hydrolase</keyword>
<keyword id="KW-1185">Reference proteome</keyword>
<name>DHAA_BRADU</name>
<gene>
    <name evidence="2" type="primary">dhaA</name>
    <name type="ordered locus">blr1087</name>
</gene>
<feature type="chain" id="PRO_0000216780" description="Haloalkane dehalogenase">
    <location>
        <begin position="1"/>
        <end position="310"/>
    </location>
</feature>
<feature type="domain" description="AB hydrolase-1" evidence="1">
    <location>
        <begin position="30"/>
        <end position="140"/>
    </location>
</feature>
<feature type="active site" description="Nucleophile" evidence="2">
    <location>
        <position position="103"/>
    </location>
</feature>
<feature type="active site" description="Proton donor" evidence="2">
    <location>
        <position position="127"/>
    </location>
</feature>
<feature type="active site" description="Proton acceptor" evidence="2">
    <location>
        <position position="280"/>
    </location>
</feature>
<feature type="strand" evidence="4">
    <location>
        <begin position="11"/>
        <end position="14"/>
    </location>
</feature>
<feature type="strand" evidence="4">
    <location>
        <begin position="17"/>
        <end position="25"/>
    </location>
</feature>
<feature type="strand" evidence="3">
    <location>
        <begin position="27"/>
        <end position="29"/>
    </location>
</feature>
<feature type="strand" evidence="4">
    <location>
        <begin position="31"/>
        <end position="35"/>
    </location>
</feature>
<feature type="helix" evidence="4">
    <location>
        <begin position="42"/>
        <end position="45"/>
    </location>
</feature>
<feature type="turn" evidence="4">
    <location>
        <begin position="46"/>
        <end position="48"/>
    </location>
</feature>
<feature type="helix" evidence="4">
    <location>
        <begin position="49"/>
        <end position="52"/>
    </location>
</feature>
<feature type="turn" evidence="4">
    <location>
        <begin position="53"/>
        <end position="55"/>
    </location>
</feature>
<feature type="strand" evidence="4">
    <location>
        <begin position="56"/>
        <end position="61"/>
    </location>
</feature>
<feature type="helix" evidence="4">
    <location>
        <begin position="78"/>
        <end position="91"/>
    </location>
</feature>
<feature type="strand" evidence="4">
    <location>
        <begin position="96"/>
        <end position="102"/>
    </location>
</feature>
<feature type="helix" evidence="4">
    <location>
        <begin position="104"/>
        <end position="115"/>
    </location>
</feature>
<feature type="turn" evidence="4">
    <location>
        <begin position="117"/>
        <end position="119"/>
    </location>
</feature>
<feature type="strand" evidence="4">
    <location>
        <begin position="120"/>
        <end position="127"/>
    </location>
</feature>
<feature type="strand" evidence="4">
    <location>
        <begin position="132"/>
        <end position="134"/>
    </location>
</feature>
<feature type="helix" evidence="4">
    <location>
        <begin position="135"/>
        <end position="137"/>
    </location>
</feature>
<feature type="helix" evidence="4">
    <location>
        <begin position="144"/>
        <end position="146"/>
    </location>
</feature>
<feature type="helix" evidence="4">
    <location>
        <begin position="147"/>
        <end position="160"/>
    </location>
</feature>
<feature type="helix" evidence="4">
    <location>
        <begin position="165"/>
        <end position="170"/>
    </location>
</feature>
<feature type="helix" evidence="4">
    <location>
        <begin position="175"/>
        <end position="178"/>
    </location>
</feature>
<feature type="turn" evidence="4">
    <location>
        <begin position="179"/>
        <end position="181"/>
    </location>
</feature>
<feature type="helix" evidence="4">
    <location>
        <begin position="182"/>
        <end position="184"/>
    </location>
</feature>
<feature type="helix" evidence="4">
    <location>
        <begin position="191"/>
        <end position="198"/>
    </location>
</feature>
<feature type="helix" evidence="4">
    <location>
        <begin position="205"/>
        <end position="207"/>
    </location>
</feature>
<feature type="helix" evidence="4">
    <location>
        <begin position="208"/>
        <end position="212"/>
    </location>
</feature>
<feature type="helix" evidence="4">
    <location>
        <begin position="214"/>
        <end position="216"/>
    </location>
</feature>
<feature type="helix" evidence="4">
    <location>
        <begin position="224"/>
        <end position="239"/>
    </location>
</feature>
<feature type="strand" evidence="4">
    <location>
        <begin position="244"/>
        <end position="251"/>
    </location>
</feature>
<feature type="strand" evidence="4">
    <location>
        <begin position="253"/>
        <end position="255"/>
    </location>
</feature>
<feature type="helix" evidence="4">
    <location>
        <begin position="257"/>
        <end position="266"/>
    </location>
</feature>
<feature type="strand" evidence="4">
    <location>
        <begin position="267"/>
        <end position="278"/>
    </location>
</feature>
<feature type="helix" evidence="4">
    <location>
        <begin position="282"/>
        <end position="303"/>
    </location>
</feature>
<sequence length="310" mass="34089">MSKPIEIEIRRAPVLGSSMAYRETGAQDAPVVLFLHGNPTSSHIWRNILPLVSPVAHCIAPDLIGFGQSGKPDIAYRFFDHVRYLDAFIEQRGVTSAYLVAQDWGTALAFHLAARRPDFVRGLAFMEFIRPMPTWQDFHHTEVAEEQDHAEAARAVFRKFRTPGEGEAMILEANAFVERVLPGGIVRKLGDEEMAPYRTPFPTPESRRPVLAFPRELPIAGEPADVYEALQSAHAALAASSYPKLLFTGEPGALVSPEFAERFAASLTRCALIRLGAGLHYLQEDHADAIGRSVAGWIAGIEAVRPQLAA</sequence>
<protein>
    <recommendedName>
        <fullName evidence="2">Haloalkane dehalogenase</fullName>
        <ecNumber evidence="2">3.8.1.5</ecNumber>
    </recommendedName>
</protein>
<evidence type="ECO:0000255" key="1"/>
<evidence type="ECO:0000255" key="2">
    <source>
        <dbReference type="HAMAP-Rule" id="MF_01231"/>
    </source>
</evidence>
<evidence type="ECO:0007829" key="3">
    <source>
        <dbReference type="PDB" id="3A2N"/>
    </source>
</evidence>
<evidence type="ECO:0007829" key="4">
    <source>
        <dbReference type="PDB" id="3AFI"/>
    </source>
</evidence>
<dbReference type="EC" id="3.8.1.5" evidence="2"/>
<dbReference type="EMBL" id="BA000040">
    <property type="protein sequence ID" value="BAC46352.1"/>
    <property type="molecule type" value="Genomic_DNA"/>
</dbReference>
<dbReference type="RefSeq" id="NP_767727.1">
    <property type="nucleotide sequence ID" value="NC_004463.1"/>
</dbReference>
<dbReference type="RefSeq" id="WP_011083907.1">
    <property type="nucleotide sequence ID" value="NC_004463.1"/>
</dbReference>
<dbReference type="PDB" id="3A2L">
    <property type="method" value="X-ray"/>
    <property type="resolution" value="1.78 A"/>
    <property type="chains" value="A/B=1-310"/>
</dbReference>
<dbReference type="PDB" id="3A2M">
    <property type="method" value="X-ray"/>
    <property type="resolution" value="1.84 A"/>
    <property type="chains" value="A/B=1-310"/>
</dbReference>
<dbReference type="PDB" id="3A2N">
    <property type="method" value="X-ray"/>
    <property type="resolution" value="1.89 A"/>
    <property type="chains" value="A/B/E/F=1-310"/>
</dbReference>
<dbReference type="PDB" id="3AFI">
    <property type="method" value="X-ray"/>
    <property type="resolution" value="1.75 A"/>
    <property type="chains" value="A/B/E/F=1-310"/>
</dbReference>
<dbReference type="PDBsum" id="3A2L"/>
<dbReference type="PDBsum" id="3A2M"/>
<dbReference type="PDBsum" id="3A2N"/>
<dbReference type="PDBsum" id="3AFI"/>
<dbReference type="SMR" id="P59337"/>
<dbReference type="MINT" id="P59337"/>
<dbReference type="STRING" id="224911.AAV28_02290"/>
<dbReference type="ESTHER" id="braja-dhaa">
    <property type="family name" value="Haloalkane_dehalogenase-HLD2"/>
</dbReference>
<dbReference type="EnsemblBacteria" id="BAC46352">
    <property type="protein sequence ID" value="BAC46352"/>
    <property type="gene ID" value="BAC46352"/>
</dbReference>
<dbReference type="GeneID" id="46488357"/>
<dbReference type="KEGG" id="bja:blr1087"/>
<dbReference type="PATRIC" id="fig|224911.44.peg.484"/>
<dbReference type="eggNOG" id="COG0596">
    <property type="taxonomic scope" value="Bacteria"/>
</dbReference>
<dbReference type="HOGENOM" id="CLU_020336_13_3_5"/>
<dbReference type="InParanoid" id="P59337"/>
<dbReference type="OrthoDB" id="9812774at2"/>
<dbReference type="PhylomeDB" id="P59337"/>
<dbReference type="BRENDA" id="3.8.1.5">
    <property type="organism ID" value="929"/>
</dbReference>
<dbReference type="EvolutionaryTrace" id="P59337"/>
<dbReference type="Proteomes" id="UP000002526">
    <property type="component" value="Chromosome"/>
</dbReference>
<dbReference type="GO" id="GO:0018786">
    <property type="term" value="F:haloalkane dehalogenase activity"/>
    <property type="evidence" value="ECO:0007669"/>
    <property type="project" value="UniProtKB-UniRule"/>
</dbReference>
<dbReference type="GO" id="GO:0016787">
    <property type="term" value="F:hydrolase activity"/>
    <property type="evidence" value="ECO:0000318"/>
    <property type="project" value="GO_Central"/>
</dbReference>
<dbReference type="GO" id="GO:0042802">
    <property type="term" value="F:identical protein binding"/>
    <property type="evidence" value="ECO:0000353"/>
    <property type="project" value="IntAct"/>
</dbReference>
<dbReference type="FunFam" id="3.40.50.1820:FF:000761">
    <property type="entry name" value="Haloalkane dehalogenase"/>
    <property type="match status" value="1"/>
</dbReference>
<dbReference type="Gene3D" id="3.40.50.1820">
    <property type="entry name" value="alpha/beta hydrolase"/>
    <property type="match status" value="1"/>
</dbReference>
<dbReference type="HAMAP" id="MF_01231">
    <property type="entry name" value="Haloalk_dehal_type2"/>
    <property type="match status" value="1"/>
</dbReference>
<dbReference type="InterPro" id="IPR000073">
    <property type="entry name" value="AB_hydrolase_1"/>
</dbReference>
<dbReference type="InterPro" id="IPR029058">
    <property type="entry name" value="AB_hydrolase_fold"/>
</dbReference>
<dbReference type="InterPro" id="IPR050266">
    <property type="entry name" value="AB_hydrolase_sf"/>
</dbReference>
<dbReference type="InterPro" id="IPR000639">
    <property type="entry name" value="Epox_hydrolase-like"/>
</dbReference>
<dbReference type="InterPro" id="IPR023594">
    <property type="entry name" value="Haloalkane_dehalogenase_2"/>
</dbReference>
<dbReference type="NCBIfam" id="NF002938">
    <property type="entry name" value="PRK03592.1"/>
    <property type="match status" value="1"/>
</dbReference>
<dbReference type="PANTHER" id="PTHR43798:SF33">
    <property type="entry name" value="HYDROLASE, PUTATIVE (AFU_ORTHOLOGUE AFUA_2G14860)-RELATED"/>
    <property type="match status" value="1"/>
</dbReference>
<dbReference type="PANTHER" id="PTHR43798">
    <property type="entry name" value="MONOACYLGLYCEROL LIPASE"/>
    <property type="match status" value="1"/>
</dbReference>
<dbReference type="Pfam" id="PF00561">
    <property type="entry name" value="Abhydrolase_1"/>
    <property type="match status" value="1"/>
</dbReference>
<dbReference type="PRINTS" id="PR00412">
    <property type="entry name" value="EPOXHYDRLASE"/>
</dbReference>
<dbReference type="SUPFAM" id="SSF53474">
    <property type="entry name" value="alpha/beta-Hydrolases"/>
    <property type="match status" value="1"/>
</dbReference>
<proteinExistence type="evidence at protein level"/>
<accession>P59337</accession>